<reference key="1">
    <citation type="submission" date="2006-09" db="EMBL/GenBank/DDBJ databases">
        <authorList>
            <consortium name="The Klebsiella pneumonia Genome Sequencing Project"/>
            <person name="McClelland M."/>
            <person name="Sanderson E.K."/>
            <person name="Spieth J."/>
            <person name="Clifton W.S."/>
            <person name="Latreille P."/>
            <person name="Sabo A."/>
            <person name="Pepin K."/>
            <person name="Bhonagiri V."/>
            <person name="Porwollik S."/>
            <person name="Ali J."/>
            <person name="Wilson R.K."/>
        </authorList>
    </citation>
    <scope>NUCLEOTIDE SEQUENCE [LARGE SCALE GENOMIC DNA]</scope>
    <source>
        <strain>ATCC 700721 / MGH 78578</strain>
    </source>
</reference>
<feature type="chain" id="PRO_1000082849" description="ATP-dependent RNA helicase RhlB">
    <location>
        <begin position="1"/>
        <end position="421"/>
    </location>
</feature>
<feature type="domain" description="Helicase ATP-binding" evidence="1">
    <location>
        <begin position="40"/>
        <end position="219"/>
    </location>
</feature>
<feature type="domain" description="Helicase C-terminal" evidence="1">
    <location>
        <begin position="245"/>
        <end position="390"/>
    </location>
</feature>
<feature type="region of interest" description="Disordered" evidence="2">
    <location>
        <begin position="396"/>
        <end position="421"/>
    </location>
</feature>
<feature type="short sequence motif" description="Q motif">
    <location>
        <begin position="9"/>
        <end position="37"/>
    </location>
</feature>
<feature type="short sequence motif" description="DEAD box">
    <location>
        <begin position="165"/>
        <end position="168"/>
    </location>
</feature>
<feature type="compositionally biased region" description="Low complexity" evidence="2">
    <location>
        <begin position="403"/>
        <end position="414"/>
    </location>
</feature>
<feature type="binding site" evidence="1">
    <location>
        <begin position="53"/>
        <end position="60"/>
    </location>
    <ligand>
        <name>ATP</name>
        <dbReference type="ChEBI" id="CHEBI:30616"/>
    </ligand>
</feature>
<evidence type="ECO:0000255" key="1">
    <source>
        <dbReference type="HAMAP-Rule" id="MF_00661"/>
    </source>
</evidence>
<evidence type="ECO:0000256" key="2">
    <source>
        <dbReference type="SAM" id="MobiDB-lite"/>
    </source>
</evidence>
<accession>A6TGG9</accession>
<name>RHLB_KLEP7</name>
<comment type="function">
    <text evidence="1">DEAD-box RNA helicase involved in RNA degradation. Has RNA-dependent ATPase activity and unwinds double-stranded RNA.</text>
</comment>
<comment type="catalytic activity">
    <reaction evidence="1">
        <text>ATP + H2O = ADP + phosphate + H(+)</text>
        <dbReference type="Rhea" id="RHEA:13065"/>
        <dbReference type="ChEBI" id="CHEBI:15377"/>
        <dbReference type="ChEBI" id="CHEBI:15378"/>
        <dbReference type="ChEBI" id="CHEBI:30616"/>
        <dbReference type="ChEBI" id="CHEBI:43474"/>
        <dbReference type="ChEBI" id="CHEBI:456216"/>
        <dbReference type="EC" id="3.6.4.13"/>
    </reaction>
</comment>
<comment type="subunit">
    <text evidence="1">Component of the RNA degradosome, which is a multiprotein complex involved in RNA processing and mRNA degradation.</text>
</comment>
<comment type="subcellular location">
    <subcellularLocation>
        <location evidence="1">Cytoplasm</location>
    </subcellularLocation>
</comment>
<comment type="similarity">
    <text evidence="1">Belongs to the DEAD box helicase family. RhlB subfamily.</text>
</comment>
<sequence length="421" mass="47108">MSKTHLTEQKFSDFALHPAVIEALEKKGFHNCTPIQALALPLTLEGRDVAGQAQTGTGKTMAFLTSTFHYLLSHPAIADRQVNQPRALIMAPTRELAVQIHADAEPLAQATGLKLGLAYGGDGYDKQLKVLESGVDILIGTTGRLIDYAKQNHINLGAIQVVVLDEADRMYDLGFIKDIRWLFRRMPPATQRLNMLFSATLSYRVRELAFEQMNNAEYVEVEPEQKTGHRIKEELFYPSNEEKMRLLQTLLEEEWPDRAIVFANTKHRCEDIWGHLAADGHRVGLLTGDVAQKKRLRILEEFTRGDLDILVATDVAARGLHIPAVTHVFNYDLPDDCEDYVHRIGRTGRAGASGHSISLACEEYALNLPAIETYIGHSIPVSKYNPDALMTDLPKPLRLTRARPGNGPRRNGPPRNRRRSG</sequence>
<protein>
    <recommendedName>
        <fullName evidence="1">ATP-dependent RNA helicase RhlB</fullName>
        <ecNumber evidence="1">3.6.4.13</ecNumber>
    </recommendedName>
</protein>
<keyword id="KW-0067">ATP-binding</keyword>
<keyword id="KW-0963">Cytoplasm</keyword>
<keyword id="KW-0347">Helicase</keyword>
<keyword id="KW-0378">Hydrolase</keyword>
<keyword id="KW-0547">Nucleotide-binding</keyword>
<keyword id="KW-0694">RNA-binding</keyword>
<dbReference type="EC" id="3.6.4.13" evidence="1"/>
<dbReference type="EMBL" id="CP000647">
    <property type="protein sequence ID" value="ABR79653.1"/>
    <property type="molecule type" value="Genomic_DNA"/>
</dbReference>
<dbReference type="RefSeq" id="WP_002883222.1">
    <property type="nucleotide sequence ID" value="NC_009648.1"/>
</dbReference>
<dbReference type="SMR" id="A6TGG9"/>
<dbReference type="STRING" id="272620.KPN_04281"/>
<dbReference type="jPOST" id="A6TGG9"/>
<dbReference type="PaxDb" id="272620-KPN_04281"/>
<dbReference type="EnsemblBacteria" id="ABR79653">
    <property type="protein sequence ID" value="ABR79653"/>
    <property type="gene ID" value="KPN_04281"/>
</dbReference>
<dbReference type="KEGG" id="kpn:KPN_04281"/>
<dbReference type="HOGENOM" id="CLU_003041_1_3_6"/>
<dbReference type="Proteomes" id="UP000000265">
    <property type="component" value="Chromosome"/>
</dbReference>
<dbReference type="GO" id="GO:0005829">
    <property type="term" value="C:cytosol"/>
    <property type="evidence" value="ECO:0007669"/>
    <property type="project" value="TreeGrafter"/>
</dbReference>
<dbReference type="GO" id="GO:0005524">
    <property type="term" value="F:ATP binding"/>
    <property type="evidence" value="ECO:0007669"/>
    <property type="project" value="UniProtKB-UniRule"/>
</dbReference>
<dbReference type="GO" id="GO:0016887">
    <property type="term" value="F:ATP hydrolysis activity"/>
    <property type="evidence" value="ECO:0007669"/>
    <property type="project" value="RHEA"/>
</dbReference>
<dbReference type="GO" id="GO:0003723">
    <property type="term" value="F:RNA binding"/>
    <property type="evidence" value="ECO:0007669"/>
    <property type="project" value="UniProtKB-UniRule"/>
</dbReference>
<dbReference type="GO" id="GO:0003724">
    <property type="term" value="F:RNA helicase activity"/>
    <property type="evidence" value="ECO:0007669"/>
    <property type="project" value="UniProtKB-UniRule"/>
</dbReference>
<dbReference type="GO" id="GO:0006401">
    <property type="term" value="P:RNA catabolic process"/>
    <property type="evidence" value="ECO:0007669"/>
    <property type="project" value="UniProtKB-UniRule"/>
</dbReference>
<dbReference type="CDD" id="cd00268">
    <property type="entry name" value="DEADc"/>
    <property type="match status" value="1"/>
</dbReference>
<dbReference type="CDD" id="cd18787">
    <property type="entry name" value="SF2_C_DEAD"/>
    <property type="match status" value="1"/>
</dbReference>
<dbReference type="FunFam" id="3.40.50.300:FF:000008">
    <property type="entry name" value="ATP-dependent RNA helicase RhlB"/>
    <property type="match status" value="1"/>
</dbReference>
<dbReference type="FunFam" id="3.40.50.300:FF:000312">
    <property type="entry name" value="ATP-dependent RNA helicase RhlB"/>
    <property type="match status" value="1"/>
</dbReference>
<dbReference type="Gene3D" id="3.40.50.300">
    <property type="entry name" value="P-loop containing nucleotide triphosphate hydrolases"/>
    <property type="match status" value="2"/>
</dbReference>
<dbReference type="HAMAP" id="MF_00661">
    <property type="entry name" value="DEAD_helicase_RhlB"/>
    <property type="match status" value="1"/>
</dbReference>
<dbReference type="InterPro" id="IPR011545">
    <property type="entry name" value="DEAD/DEAH_box_helicase_dom"/>
</dbReference>
<dbReference type="InterPro" id="IPR050079">
    <property type="entry name" value="DEAD_box_RNA_helicase"/>
</dbReference>
<dbReference type="InterPro" id="IPR014001">
    <property type="entry name" value="Helicase_ATP-bd"/>
</dbReference>
<dbReference type="InterPro" id="IPR001650">
    <property type="entry name" value="Helicase_C-like"/>
</dbReference>
<dbReference type="InterPro" id="IPR027417">
    <property type="entry name" value="P-loop_NTPase"/>
</dbReference>
<dbReference type="InterPro" id="IPR000629">
    <property type="entry name" value="RNA-helicase_DEAD-box_CS"/>
</dbReference>
<dbReference type="InterPro" id="IPR023554">
    <property type="entry name" value="RNA_helicase_ATP-dep_RhlB"/>
</dbReference>
<dbReference type="InterPro" id="IPR014014">
    <property type="entry name" value="RNA_helicase_DEAD_Q_motif"/>
</dbReference>
<dbReference type="NCBIfam" id="NF003419">
    <property type="entry name" value="PRK04837.1"/>
    <property type="match status" value="1"/>
</dbReference>
<dbReference type="PANTHER" id="PTHR47959:SF10">
    <property type="entry name" value="ATP-DEPENDENT RNA HELICASE RHLB"/>
    <property type="match status" value="1"/>
</dbReference>
<dbReference type="PANTHER" id="PTHR47959">
    <property type="entry name" value="ATP-DEPENDENT RNA HELICASE RHLE-RELATED"/>
    <property type="match status" value="1"/>
</dbReference>
<dbReference type="Pfam" id="PF00270">
    <property type="entry name" value="DEAD"/>
    <property type="match status" value="1"/>
</dbReference>
<dbReference type="Pfam" id="PF00271">
    <property type="entry name" value="Helicase_C"/>
    <property type="match status" value="1"/>
</dbReference>
<dbReference type="SMART" id="SM00487">
    <property type="entry name" value="DEXDc"/>
    <property type="match status" value="1"/>
</dbReference>
<dbReference type="SMART" id="SM00490">
    <property type="entry name" value="HELICc"/>
    <property type="match status" value="1"/>
</dbReference>
<dbReference type="SUPFAM" id="SSF52540">
    <property type="entry name" value="P-loop containing nucleoside triphosphate hydrolases"/>
    <property type="match status" value="1"/>
</dbReference>
<dbReference type="PROSITE" id="PS00039">
    <property type="entry name" value="DEAD_ATP_HELICASE"/>
    <property type="match status" value="1"/>
</dbReference>
<dbReference type="PROSITE" id="PS51192">
    <property type="entry name" value="HELICASE_ATP_BIND_1"/>
    <property type="match status" value="1"/>
</dbReference>
<dbReference type="PROSITE" id="PS51194">
    <property type="entry name" value="HELICASE_CTER"/>
    <property type="match status" value="1"/>
</dbReference>
<dbReference type="PROSITE" id="PS51195">
    <property type="entry name" value="Q_MOTIF"/>
    <property type="match status" value="1"/>
</dbReference>
<proteinExistence type="inferred from homology"/>
<gene>
    <name evidence="1" type="primary">rhlB</name>
    <name type="ordered locus">KPN78578_42290</name>
    <name type="ORF">KPN_04281</name>
</gene>
<organism>
    <name type="scientific">Klebsiella pneumoniae subsp. pneumoniae (strain ATCC 700721 / MGH 78578)</name>
    <dbReference type="NCBI Taxonomy" id="272620"/>
    <lineage>
        <taxon>Bacteria</taxon>
        <taxon>Pseudomonadati</taxon>
        <taxon>Pseudomonadota</taxon>
        <taxon>Gammaproteobacteria</taxon>
        <taxon>Enterobacterales</taxon>
        <taxon>Enterobacteriaceae</taxon>
        <taxon>Klebsiella/Raoultella group</taxon>
        <taxon>Klebsiella</taxon>
        <taxon>Klebsiella pneumoniae complex</taxon>
    </lineage>
</organism>